<organism>
    <name type="scientific">Mus musculus</name>
    <name type="common">Mouse</name>
    <dbReference type="NCBI Taxonomy" id="10090"/>
    <lineage>
        <taxon>Eukaryota</taxon>
        <taxon>Metazoa</taxon>
        <taxon>Chordata</taxon>
        <taxon>Craniata</taxon>
        <taxon>Vertebrata</taxon>
        <taxon>Euteleostomi</taxon>
        <taxon>Mammalia</taxon>
        <taxon>Eutheria</taxon>
        <taxon>Euarchontoglires</taxon>
        <taxon>Glires</taxon>
        <taxon>Rodentia</taxon>
        <taxon>Myomorpha</taxon>
        <taxon>Muroidea</taxon>
        <taxon>Muridae</taxon>
        <taxon>Murinae</taxon>
        <taxon>Mus</taxon>
        <taxon>Mus</taxon>
    </lineage>
</organism>
<proteinExistence type="evidence at transcript level"/>
<keyword id="KW-0217">Developmental protein</keyword>
<keyword id="KW-0221">Differentiation</keyword>
<keyword id="KW-0238">DNA-binding</keyword>
<keyword id="KW-0539">Nucleus</keyword>
<keyword id="KW-1185">Reference proteome</keyword>
<keyword id="KW-0804">Transcription</keyword>
<keyword id="KW-0805">Transcription regulation</keyword>
<accession>Q02576</accession>
<gene>
    <name type="primary">Nhlh1</name>
    <name type="synonym">Hen1</name>
</gene>
<dbReference type="EMBL" id="M97506">
    <property type="protein sequence ID" value="AAA37801.1"/>
    <property type="molecule type" value="Genomic_DNA"/>
</dbReference>
<dbReference type="EMBL" id="M82874">
    <property type="protein sequence ID" value="AAA39840.1"/>
    <property type="molecule type" value="mRNA"/>
</dbReference>
<dbReference type="EMBL" id="BC051018">
    <property type="protein sequence ID" value="AAH51018.1"/>
    <property type="molecule type" value="mRNA"/>
</dbReference>
<dbReference type="CCDS" id="CCDS15506.1"/>
<dbReference type="PIR" id="A41788">
    <property type="entry name" value="A41788"/>
</dbReference>
<dbReference type="RefSeq" id="NP_035046.1">
    <property type="nucleotide sequence ID" value="NM_010916.2"/>
</dbReference>
<dbReference type="SMR" id="Q02576"/>
<dbReference type="FunCoup" id="Q02576">
    <property type="interactions" value="112"/>
</dbReference>
<dbReference type="STRING" id="10090.ENSMUSP00000057489"/>
<dbReference type="PhosphoSitePlus" id="Q02576"/>
<dbReference type="PaxDb" id="10090-ENSMUSP00000057489"/>
<dbReference type="Antibodypedia" id="34277">
    <property type="antibodies" value="148 antibodies from 24 providers"/>
</dbReference>
<dbReference type="DNASU" id="18071"/>
<dbReference type="Ensembl" id="ENSMUST00000059794.4">
    <property type="protein sequence ID" value="ENSMUSP00000057489.4"/>
    <property type="gene ID" value="ENSMUSG00000051251.4"/>
</dbReference>
<dbReference type="GeneID" id="18071"/>
<dbReference type="KEGG" id="mmu:18071"/>
<dbReference type="UCSC" id="uc007dpj.2">
    <property type="organism name" value="mouse"/>
</dbReference>
<dbReference type="AGR" id="MGI:98481"/>
<dbReference type="CTD" id="4807"/>
<dbReference type="MGI" id="MGI:98481">
    <property type="gene designation" value="Nhlh1"/>
</dbReference>
<dbReference type="VEuPathDB" id="HostDB:ENSMUSG00000051251"/>
<dbReference type="eggNOG" id="KOG4029">
    <property type="taxonomic scope" value="Eukaryota"/>
</dbReference>
<dbReference type="GeneTree" id="ENSGT00940000162622"/>
<dbReference type="HOGENOM" id="CLU_148882_1_0_1"/>
<dbReference type="InParanoid" id="Q02576"/>
<dbReference type="OMA" id="CGQSRGP"/>
<dbReference type="PhylomeDB" id="Q02576"/>
<dbReference type="BioGRID-ORCS" id="18071">
    <property type="hits" value="7 hits in 81 CRISPR screens"/>
</dbReference>
<dbReference type="ChiTaRS" id="Henmt1">
    <property type="organism name" value="mouse"/>
</dbReference>
<dbReference type="PRO" id="PR:Q02576"/>
<dbReference type="Proteomes" id="UP000000589">
    <property type="component" value="Chromosome 1"/>
</dbReference>
<dbReference type="RNAct" id="Q02576">
    <property type="molecule type" value="protein"/>
</dbReference>
<dbReference type="Bgee" id="ENSMUSG00000051251">
    <property type="expression patterns" value="Expressed in cerebellar layer and 61 other cell types or tissues"/>
</dbReference>
<dbReference type="GO" id="GO:0005634">
    <property type="term" value="C:nucleus"/>
    <property type="evidence" value="ECO:0007669"/>
    <property type="project" value="UniProtKB-SubCell"/>
</dbReference>
<dbReference type="GO" id="GO:0001228">
    <property type="term" value="F:DNA-binding transcription activator activity, RNA polymerase II-specific"/>
    <property type="evidence" value="ECO:0007669"/>
    <property type="project" value="Ensembl"/>
</dbReference>
<dbReference type="GO" id="GO:0046983">
    <property type="term" value="F:protein dimerization activity"/>
    <property type="evidence" value="ECO:0007669"/>
    <property type="project" value="InterPro"/>
</dbReference>
<dbReference type="GO" id="GO:0000977">
    <property type="term" value="F:RNA polymerase II transcription regulatory region sequence-specific DNA binding"/>
    <property type="evidence" value="ECO:0007669"/>
    <property type="project" value="Ensembl"/>
</dbReference>
<dbReference type="GO" id="GO:0030154">
    <property type="term" value="P:cell differentiation"/>
    <property type="evidence" value="ECO:0007669"/>
    <property type="project" value="UniProtKB-KW"/>
</dbReference>
<dbReference type="CDD" id="cd19701">
    <property type="entry name" value="bHLH_TS_HEN1"/>
    <property type="match status" value="1"/>
</dbReference>
<dbReference type="FunFam" id="4.10.280.10:FF:000027">
    <property type="entry name" value="Nescient helix-loop-helix 1"/>
    <property type="match status" value="1"/>
</dbReference>
<dbReference type="Gene3D" id="4.10.280.10">
    <property type="entry name" value="Helix-loop-helix DNA-binding domain"/>
    <property type="match status" value="1"/>
</dbReference>
<dbReference type="InterPro" id="IPR011598">
    <property type="entry name" value="bHLH_dom"/>
</dbReference>
<dbReference type="InterPro" id="IPR036638">
    <property type="entry name" value="HLH_DNA-bd_sf"/>
</dbReference>
<dbReference type="InterPro" id="IPR040238">
    <property type="entry name" value="TAL-like"/>
</dbReference>
<dbReference type="PANTHER" id="PTHR13864:SF20">
    <property type="entry name" value="HELIX-LOOP-HELIX PROTEIN 1"/>
    <property type="match status" value="1"/>
</dbReference>
<dbReference type="PANTHER" id="PTHR13864">
    <property type="entry name" value="T-CELL ACUTE LYMPHOCYTIC LEUKEMIA/STEM CELL LEUKEMIA-RELATED"/>
    <property type="match status" value="1"/>
</dbReference>
<dbReference type="Pfam" id="PF00010">
    <property type="entry name" value="HLH"/>
    <property type="match status" value="1"/>
</dbReference>
<dbReference type="SMART" id="SM00353">
    <property type="entry name" value="HLH"/>
    <property type="match status" value="1"/>
</dbReference>
<dbReference type="SUPFAM" id="SSF47459">
    <property type="entry name" value="HLH, helix-loop-helix DNA-binding domain"/>
    <property type="match status" value="1"/>
</dbReference>
<dbReference type="PROSITE" id="PS50888">
    <property type="entry name" value="BHLH"/>
    <property type="match status" value="1"/>
</dbReference>
<evidence type="ECO:0000255" key="1">
    <source>
        <dbReference type="PROSITE-ProRule" id="PRU00981"/>
    </source>
</evidence>
<evidence type="ECO:0000256" key="2">
    <source>
        <dbReference type="SAM" id="MobiDB-lite"/>
    </source>
</evidence>
<feature type="chain" id="PRO_0000127198" description="Helix-loop-helix protein 1">
    <location>
        <begin position="1"/>
        <end position="133"/>
    </location>
</feature>
<feature type="domain" description="bHLH" evidence="1">
    <location>
        <begin position="75"/>
        <end position="127"/>
    </location>
</feature>
<feature type="region of interest" description="Disordered" evidence="2">
    <location>
        <begin position="1"/>
        <end position="78"/>
    </location>
</feature>
<feature type="compositionally biased region" description="Gly residues" evidence="2">
    <location>
        <begin position="25"/>
        <end position="39"/>
    </location>
</feature>
<feature type="compositionally biased region" description="Basic and acidic residues" evidence="2">
    <location>
        <begin position="52"/>
        <end position="65"/>
    </location>
</feature>
<feature type="compositionally biased region" description="Basic residues" evidence="2">
    <location>
        <begin position="66"/>
        <end position="78"/>
    </location>
</feature>
<reference key="1">
    <citation type="journal article" date="1992" name="Proc. Natl. Acad. Sci. U.S.A.">
        <title>HEN1 and HEN2: a subgroup of basic helix-loop-helix genes that are coexpressed in a human neuroblastoma.</title>
        <authorList>
            <person name="Brown L."/>
            <person name="Espinosa R. III"/>
            <person name="le Beau M.M."/>
            <person name="Siciliano M.J."/>
            <person name="Baer R."/>
        </authorList>
    </citation>
    <scope>NUCLEOTIDE SEQUENCE [GENOMIC DNA]</scope>
</reference>
<reference key="2">
    <citation type="journal article" date="1992" name="Proc. Natl. Acad. Sci. U.S.A.">
        <title>Molecular characterization of NSCL, a gene encoding a helix-loop-helix protein expressed in the developing nervous system.</title>
        <authorList>
            <person name="Begley C.G."/>
            <person name="Lipkowitz S."/>
            <person name="Gobel V."/>
            <person name="Mahon K.A."/>
            <person name="Bertness V."/>
            <person name="Green A.R."/>
            <person name="Gough N.M."/>
            <person name="Kirsch I.R."/>
        </authorList>
    </citation>
    <scope>NUCLEOTIDE SEQUENCE [MRNA]</scope>
</reference>
<reference key="3">
    <citation type="journal article" date="2004" name="Genome Res.">
        <title>The status, quality, and expansion of the NIH full-length cDNA project: the Mammalian Gene Collection (MGC).</title>
        <authorList>
            <consortium name="The MGC Project Team"/>
        </authorList>
    </citation>
    <scope>NUCLEOTIDE SEQUENCE [LARGE SCALE MRNA]</scope>
    <source>
        <tissue>Olfactory epithelium</tissue>
    </source>
</reference>
<name>HEN1_MOUSE</name>
<sequence>MMLNSDTMELDLPPTHSETESGFSDCGGGPGPDGAGSGDPGVVQVRSSELGESGRKDLQHLSREERRRRRRATAKYRTAHATRERIRVEAFNLAFAELRKLLPTLPPDKKLSKIEILRLAICYISYLNHVLDV</sequence>
<protein>
    <recommendedName>
        <fullName>Helix-loop-helix protein 1</fullName>
        <shortName>HEN-1</shortName>
    </recommendedName>
    <alternativeName>
        <fullName>Nescient helix loop helix 1</fullName>
        <shortName>NSCL-1</shortName>
    </alternativeName>
</protein>
<comment type="function">
    <text>May serve as DNA-binding protein and may be involved in the control of cell-type determination, possibly within the developing nervous system.</text>
</comment>
<comment type="subunit">
    <text>Efficient DNA binding requires dimerization with another bHLH protein.</text>
</comment>
<comment type="subcellular location">
    <subcellularLocation>
        <location evidence="1">Nucleus</location>
    </subcellularLocation>
</comment>